<comment type="subunit">
    <text evidence="1">Part of the 50S ribosomal subunit.</text>
</comment>
<comment type="similarity">
    <text evidence="1">Belongs to the universal ribosomal protein uL30 family.</text>
</comment>
<feature type="chain" id="PRO_1000087272" description="Large ribosomal subunit protein uL30">
    <location>
        <begin position="1"/>
        <end position="61"/>
    </location>
</feature>
<gene>
    <name evidence="1" type="primary">rpmD</name>
    <name type="ordered locus">Tmel_0971</name>
</gene>
<protein>
    <recommendedName>
        <fullName evidence="1">Large ribosomal subunit protein uL30</fullName>
    </recommendedName>
    <alternativeName>
        <fullName evidence="2">50S ribosomal protein L30</fullName>
    </alternativeName>
</protein>
<sequence length="61" mass="7177">MKKLKITLVKSPIGYKYDQKDTVKRLGLRKLNSTVIKEDVPQVRGMIRKVRHLVKVEEIEE</sequence>
<name>RL30_THEM4</name>
<accession>A6LLN1</accession>
<proteinExistence type="inferred from homology"/>
<keyword id="KW-0687">Ribonucleoprotein</keyword>
<keyword id="KW-0689">Ribosomal protein</keyword>
<reference key="1">
    <citation type="submission" date="2007-05" db="EMBL/GenBank/DDBJ databases">
        <title>Complete sequence of Thermosipho melanesiensis BI429.</title>
        <authorList>
            <consortium name="US DOE Joint Genome Institute"/>
            <person name="Copeland A."/>
            <person name="Lucas S."/>
            <person name="Lapidus A."/>
            <person name="Barry K."/>
            <person name="Glavina del Rio T."/>
            <person name="Dalin E."/>
            <person name="Tice H."/>
            <person name="Pitluck S."/>
            <person name="Chertkov O."/>
            <person name="Brettin T."/>
            <person name="Bruce D."/>
            <person name="Detter J.C."/>
            <person name="Han C."/>
            <person name="Schmutz J."/>
            <person name="Larimer F."/>
            <person name="Land M."/>
            <person name="Hauser L."/>
            <person name="Kyrpides N."/>
            <person name="Mikhailova N."/>
            <person name="Nelson K."/>
            <person name="Gogarten J.P."/>
            <person name="Noll K."/>
            <person name="Richardson P."/>
        </authorList>
    </citation>
    <scope>NUCLEOTIDE SEQUENCE [LARGE SCALE GENOMIC DNA]</scope>
    <source>
        <strain>DSM 12029 / CIP 104789 / BI429</strain>
    </source>
</reference>
<organism>
    <name type="scientific">Thermosipho melanesiensis (strain DSM 12029 / CIP 104789 / BI429)</name>
    <dbReference type="NCBI Taxonomy" id="391009"/>
    <lineage>
        <taxon>Bacteria</taxon>
        <taxon>Thermotogati</taxon>
        <taxon>Thermotogota</taxon>
        <taxon>Thermotogae</taxon>
        <taxon>Thermotogales</taxon>
        <taxon>Fervidobacteriaceae</taxon>
        <taxon>Thermosipho</taxon>
    </lineage>
</organism>
<evidence type="ECO:0000255" key="1">
    <source>
        <dbReference type="HAMAP-Rule" id="MF_01371"/>
    </source>
</evidence>
<evidence type="ECO:0000305" key="2"/>
<dbReference type="EMBL" id="CP000716">
    <property type="protein sequence ID" value="ABR30832.1"/>
    <property type="molecule type" value="Genomic_DNA"/>
</dbReference>
<dbReference type="RefSeq" id="WP_012057193.1">
    <property type="nucleotide sequence ID" value="NC_009616.1"/>
</dbReference>
<dbReference type="SMR" id="A6LLN1"/>
<dbReference type="STRING" id="391009.Tmel_0971"/>
<dbReference type="KEGG" id="tme:Tmel_0971"/>
<dbReference type="eggNOG" id="COG1841">
    <property type="taxonomic scope" value="Bacteria"/>
</dbReference>
<dbReference type="HOGENOM" id="CLU_131047_2_1_0"/>
<dbReference type="OrthoDB" id="9812790at2"/>
<dbReference type="Proteomes" id="UP000001110">
    <property type="component" value="Chromosome"/>
</dbReference>
<dbReference type="GO" id="GO:0022625">
    <property type="term" value="C:cytosolic large ribosomal subunit"/>
    <property type="evidence" value="ECO:0007669"/>
    <property type="project" value="TreeGrafter"/>
</dbReference>
<dbReference type="GO" id="GO:0003735">
    <property type="term" value="F:structural constituent of ribosome"/>
    <property type="evidence" value="ECO:0007669"/>
    <property type="project" value="InterPro"/>
</dbReference>
<dbReference type="GO" id="GO:0006412">
    <property type="term" value="P:translation"/>
    <property type="evidence" value="ECO:0007669"/>
    <property type="project" value="UniProtKB-UniRule"/>
</dbReference>
<dbReference type="CDD" id="cd01658">
    <property type="entry name" value="Ribosomal_L30"/>
    <property type="match status" value="1"/>
</dbReference>
<dbReference type="FunFam" id="3.30.1390.20:FF:000001">
    <property type="entry name" value="50S ribosomal protein L30"/>
    <property type="match status" value="1"/>
</dbReference>
<dbReference type="Gene3D" id="3.30.1390.20">
    <property type="entry name" value="Ribosomal protein L30, ferredoxin-like fold domain"/>
    <property type="match status" value="1"/>
</dbReference>
<dbReference type="HAMAP" id="MF_01371_B">
    <property type="entry name" value="Ribosomal_uL30_B"/>
    <property type="match status" value="1"/>
</dbReference>
<dbReference type="InterPro" id="IPR036919">
    <property type="entry name" value="Ribo_uL30_ferredoxin-like_sf"/>
</dbReference>
<dbReference type="InterPro" id="IPR005996">
    <property type="entry name" value="Ribosomal_uL30_bac-type"/>
</dbReference>
<dbReference type="InterPro" id="IPR018038">
    <property type="entry name" value="Ribosomal_uL30_CS"/>
</dbReference>
<dbReference type="InterPro" id="IPR016082">
    <property type="entry name" value="Ribosomal_uL30_ferredoxin-like"/>
</dbReference>
<dbReference type="NCBIfam" id="TIGR01308">
    <property type="entry name" value="rpmD_bact"/>
    <property type="match status" value="1"/>
</dbReference>
<dbReference type="PANTHER" id="PTHR15892:SF2">
    <property type="entry name" value="LARGE RIBOSOMAL SUBUNIT PROTEIN UL30M"/>
    <property type="match status" value="1"/>
</dbReference>
<dbReference type="PANTHER" id="PTHR15892">
    <property type="entry name" value="MITOCHONDRIAL RIBOSOMAL PROTEIN L30"/>
    <property type="match status" value="1"/>
</dbReference>
<dbReference type="Pfam" id="PF00327">
    <property type="entry name" value="Ribosomal_L30"/>
    <property type="match status" value="1"/>
</dbReference>
<dbReference type="PIRSF" id="PIRSF002211">
    <property type="entry name" value="Ribosomal_L30_bac-type"/>
    <property type="match status" value="1"/>
</dbReference>
<dbReference type="SUPFAM" id="SSF55129">
    <property type="entry name" value="Ribosomal protein L30p/L7e"/>
    <property type="match status" value="1"/>
</dbReference>
<dbReference type="PROSITE" id="PS00634">
    <property type="entry name" value="RIBOSOMAL_L30"/>
    <property type="match status" value="1"/>
</dbReference>